<keyword id="KW-0255">Endonuclease</keyword>
<keyword id="KW-0378">Hydrolase</keyword>
<keyword id="KW-0540">Nuclease</keyword>
<keyword id="KW-1185">Reference proteome</keyword>
<keyword id="KW-0694">RNA-binding</keyword>
<keyword id="KW-0819">tRNA processing</keyword>
<proteinExistence type="inferred from homology"/>
<sequence length="140" mass="15735">MALPKANRLKSRKDFQAVFREGIRRNGSYLTLRALKPLYSRKPSLDTATQTTQPIESVHISSIRIGISISTKVSKRAVVRNRIKRQITSALYSLLPRLAPGWRLVFIVKPTAAESKCVSPQFLQELEQLLAQAEVFDGNS</sequence>
<evidence type="ECO:0000255" key="1">
    <source>
        <dbReference type="HAMAP-Rule" id="MF_00227"/>
    </source>
</evidence>
<dbReference type="EC" id="3.1.26.5" evidence="1"/>
<dbReference type="EMBL" id="CP001037">
    <property type="protein sequence ID" value="ACC80272.1"/>
    <property type="molecule type" value="Genomic_DNA"/>
</dbReference>
<dbReference type="RefSeq" id="WP_012408290.1">
    <property type="nucleotide sequence ID" value="NC_010628.1"/>
</dbReference>
<dbReference type="SMR" id="B2J0Q5"/>
<dbReference type="STRING" id="63737.Npun_R1587"/>
<dbReference type="EnsemblBacteria" id="ACC80272">
    <property type="protein sequence ID" value="ACC80272"/>
    <property type="gene ID" value="Npun_R1587"/>
</dbReference>
<dbReference type="KEGG" id="npu:Npun_R1587"/>
<dbReference type="eggNOG" id="COG0594">
    <property type="taxonomic scope" value="Bacteria"/>
</dbReference>
<dbReference type="HOGENOM" id="CLU_117179_9_0_3"/>
<dbReference type="OrthoDB" id="458878at2"/>
<dbReference type="PhylomeDB" id="B2J0Q5"/>
<dbReference type="Proteomes" id="UP000001191">
    <property type="component" value="Chromosome"/>
</dbReference>
<dbReference type="GO" id="GO:0030677">
    <property type="term" value="C:ribonuclease P complex"/>
    <property type="evidence" value="ECO:0007669"/>
    <property type="project" value="TreeGrafter"/>
</dbReference>
<dbReference type="GO" id="GO:0042781">
    <property type="term" value="F:3'-tRNA processing endoribonuclease activity"/>
    <property type="evidence" value="ECO:0007669"/>
    <property type="project" value="TreeGrafter"/>
</dbReference>
<dbReference type="GO" id="GO:0004526">
    <property type="term" value="F:ribonuclease P activity"/>
    <property type="evidence" value="ECO:0007669"/>
    <property type="project" value="UniProtKB-UniRule"/>
</dbReference>
<dbReference type="GO" id="GO:0000049">
    <property type="term" value="F:tRNA binding"/>
    <property type="evidence" value="ECO:0007669"/>
    <property type="project" value="UniProtKB-UniRule"/>
</dbReference>
<dbReference type="GO" id="GO:0001682">
    <property type="term" value="P:tRNA 5'-leader removal"/>
    <property type="evidence" value="ECO:0007669"/>
    <property type="project" value="UniProtKB-UniRule"/>
</dbReference>
<dbReference type="Gene3D" id="3.30.230.10">
    <property type="match status" value="1"/>
</dbReference>
<dbReference type="HAMAP" id="MF_00227">
    <property type="entry name" value="RNase_P"/>
    <property type="match status" value="1"/>
</dbReference>
<dbReference type="InterPro" id="IPR020568">
    <property type="entry name" value="Ribosomal_Su5_D2-typ_SF"/>
</dbReference>
<dbReference type="InterPro" id="IPR014721">
    <property type="entry name" value="Ribsml_uS5_D2-typ_fold_subgr"/>
</dbReference>
<dbReference type="InterPro" id="IPR000100">
    <property type="entry name" value="RNase_P"/>
</dbReference>
<dbReference type="NCBIfam" id="TIGR00188">
    <property type="entry name" value="rnpA"/>
    <property type="match status" value="1"/>
</dbReference>
<dbReference type="PANTHER" id="PTHR33992">
    <property type="entry name" value="RIBONUCLEASE P PROTEIN COMPONENT"/>
    <property type="match status" value="1"/>
</dbReference>
<dbReference type="PANTHER" id="PTHR33992:SF1">
    <property type="entry name" value="RIBONUCLEASE P PROTEIN COMPONENT"/>
    <property type="match status" value="1"/>
</dbReference>
<dbReference type="Pfam" id="PF00825">
    <property type="entry name" value="Ribonuclease_P"/>
    <property type="match status" value="1"/>
</dbReference>
<dbReference type="SUPFAM" id="SSF54211">
    <property type="entry name" value="Ribosomal protein S5 domain 2-like"/>
    <property type="match status" value="1"/>
</dbReference>
<reference key="1">
    <citation type="journal article" date="2013" name="Plant Physiol.">
        <title>A Nostoc punctiforme Sugar Transporter Necessary to Establish a Cyanobacterium-Plant Symbiosis.</title>
        <authorList>
            <person name="Ekman M."/>
            <person name="Picossi S."/>
            <person name="Campbell E.L."/>
            <person name="Meeks J.C."/>
            <person name="Flores E."/>
        </authorList>
    </citation>
    <scope>NUCLEOTIDE SEQUENCE [LARGE SCALE GENOMIC DNA]</scope>
    <source>
        <strain>ATCC 29133 / PCC 73102</strain>
    </source>
</reference>
<protein>
    <recommendedName>
        <fullName evidence="1">Ribonuclease P protein component</fullName>
        <shortName evidence="1">RNase P protein</shortName>
        <shortName evidence="1">RNaseP protein</shortName>
        <ecNumber evidence="1">3.1.26.5</ecNumber>
    </recommendedName>
    <alternativeName>
        <fullName evidence="1">Protein C5</fullName>
    </alternativeName>
</protein>
<comment type="function">
    <text evidence="1">RNaseP catalyzes the removal of the 5'-leader sequence from pre-tRNA to produce the mature 5'-terminus. It can also cleave other RNA substrates such as 4.5S RNA. The protein component plays an auxiliary but essential role in vivo by binding to the 5'-leader sequence and broadening the substrate specificity of the ribozyme.</text>
</comment>
<comment type="catalytic activity">
    <reaction evidence="1">
        <text>Endonucleolytic cleavage of RNA, removing 5'-extranucleotides from tRNA precursor.</text>
        <dbReference type="EC" id="3.1.26.5"/>
    </reaction>
</comment>
<comment type="subunit">
    <text evidence="1">Consists of a catalytic RNA component (M1 or rnpB) and a protein subunit.</text>
</comment>
<comment type="similarity">
    <text evidence="1">Belongs to the RnpA family.</text>
</comment>
<gene>
    <name evidence="1" type="primary">rnpA</name>
    <name type="ordered locus">Npun_R1587</name>
</gene>
<name>RNPA_NOSP7</name>
<organism>
    <name type="scientific">Nostoc punctiforme (strain ATCC 29133 / PCC 73102)</name>
    <dbReference type="NCBI Taxonomy" id="63737"/>
    <lineage>
        <taxon>Bacteria</taxon>
        <taxon>Bacillati</taxon>
        <taxon>Cyanobacteriota</taxon>
        <taxon>Cyanophyceae</taxon>
        <taxon>Nostocales</taxon>
        <taxon>Nostocaceae</taxon>
        <taxon>Nostoc</taxon>
    </lineage>
</organism>
<feature type="chain" id="PRO_1000100377" description="Ribonuclease P protein component">
    <location>
        <begin position="1"/>
        <end position="140"/>
    </location>
</feature>
<accession>B2J0Q5</accession>